<organism>
    <name type="scientific">Escherichia coli O157:H7</name>
    <dbReference type="NCBI Taxonomy" id="83334"/>
    <lineage>
        <taxon>Bacteria</taxon>
        <taxon>Pseudomonadati</taxon>
        <taxon>Pseudomonadota</taxon>
        <taxon>Gammaproteobacteria</taxon>
        <taxon>Enterobacterales</taxon>
        <taxon>Enterobacteriaceae</taxon>
        <taxon>Escherichia</taxon>
    </lineage>
</organism>
<dbReference type="EC" id="2.3.1.57" evidence="2"/>
<dbReference type="EMBL" id="AE005174">
    <property type="protein sequence ID" value="AAG56571.1"/>
    <property type="molecule type" value="Genomic_DNA"/>
</dbReference>
<dbReference type="EMBL" id="BA000007">
    <property type="protein sequence ID" value="BAB35713.1"/>
    <property type="molecule type" value="Genomic_DNA"/>
</dbReference>
<dbReference type="PIR" id="B90915">
    <property type="entry name" value="B90915"/>
</dbReference>
<dbReference type="PIR" id="G85763">
    <property type="entry name" value="G85763"/>
</dbReference>
<dbReference type="RefSeq" id="NP_310317.1">
    <property type="nucleotide sequence ID" value="NC_002695.1"/>
</dbReference>
<dbReference type="RefSeq" id="WP_001138581.1">
    <property type="nucleotide sequence ID" value="NZ_VOAI01000007.1"/>
</dbReference>
<dbReference type="SMR" id="P0A952"/>
<dbReference type="STRING" id="155864.Z2571"/>
<dbReference type="GeneID" id="75204427"/>
<dbReference type="GeneID" id="915270"/>
<dbReference type="KEGG" id="ece:Z2571"/>
<dbReference type="KEGG" id="ecs:ECs_2290"/>
<dbReference type="PATRIC" id="fig|386585.9.peg.2398"/>
<dbReference type="eggNOG" id="COG1670">
    <property type="taxonomic scope" value="Bacteria"/>
</dbReference>
<dbReference type="HOGENOM" id="CLU_013985_3_2_6"/>
<dbReference type="OMA" id="AAIHIYK"/>
<dbReference type="UniPathway" id="UPA00211"/>
<dbReference type="UniPathway" id="UPA00250"/>
<dbReference type="Proteomes" id="UP000000558">
    <property type="component" value="Chromosome"/>
</dbReference>
<dbReference type="Proteomes" id="UP000002519">
    <property type="component" value="Chromosome"/>
</dbReference>
<dbReference type="GO" id="GO:0005737">
    <property type="term" value="C:cytoplasm"/>
    <property type="evidence" value="ECO:0007669"/>
    <property type="project" value="UniProtKB-SubCell"/>
</dbReference>
<dbReference type="GO" id="GO:0004145">
    <property type="term" value="F:diamine N-acetyltransferase activity"/>
    <property type="evidence" value="ECO:0000250"/>
    <property type="project" value="UniProtKB"/>
</dbReference>
<dbReference type="GO" id="GO:0000287">
    <property type="term" value="F:magnesium ion binding"/>
    <property type="evidence" value="ECO:0000250"/>
    <property type="project" value="UniProtKB"/>
</dbReference>
<dbReference type="GO" id="GO:0006598">
    <property type="term" value="P:polyamine catabolic process"/>
    <property type="evidence" value="ECO:0000250"/>
    <property type="project" value="UniProtKB"/>
</dbReference>
<dbReference type="GO" id="GO:0046203">
    <property type="term" value="P:spermidine catabolic process"/>
    <property type="evidence" value="ECO:0007669"/>
    <property type="project" value="UniProtKB-UniPathway"/>
</dbReference>
<dbReference type="GO" id="GO:0046208">
    <property type="term" value="P:spermine catabolic process"/>
    <property type="evidence" value="ECO:0007669"/>
    <property type="project" value="UniProtKB-UniPathway"/>
</dbReference>
<dbReference type="CDD" id="cd04301">
    <property type="entry name" value="NAT_SF"/>
    <property type="match status" value="1"/>
</dbReference>
<dbReference type="FunFam" id="3.40.630.30:FF:000007">
    <property type="entry name" value="Spermidine N(1)-acetyltransferase"/>
    <property type="match status" value="1"/>
</dbReference>
<dbReference type="Gene3D" id="3.40.630.30">
    <property type="match status" value="1"/>
</dbReference>
<dbReference type="InterPro" id="IPR016181">
    <property type="entry name" value="Acyl_CoA_acyltransferase"/>
</dbReference>
<dbReference type="InterPro" id="IPR000182">
    <property type="entry name" value="GNAT_dom"/>
</dbReference>
<dbReference type="NCBIfam" id="NF011709">
    <property type="entry name" value="PRK15130.1"/>
    <property type="match status" value="1"/>
</dbReference>
<dbReference type="PANTHER" id="PTHR43415">
    <property type="entry name" value="SPERMIDINE N(1)-ACETYLTRANSFERASE"/>
    <property type="match status" value="1"/>
</dbReference>
<dbReference type="PANTHER" id="PTHR43415:SF6">
    <property type="entry name" value="SPERMIDINE N(1)-ACETYLTRANSFERASE"/>
    <property type="match status" value="1"/>
</dbReference>
<dbReference type="Pfam" id="PF13302">
    <property type="entry name" value="Acetyltransf_3"/>
    <property type="match status" value="1"/>
</dbReference>
<dbReference type="SUPFAM" id="SSF55729">
    <property type="entry name" value="Acyl-CoA N-acyltransferases (Nat)"/>
    <property type="match status" value="1"/>
</dbReference>
<dbReference type="PROSITE" id="PS51186">
    <property type="entry name" value="GNAT"/>
    <property type="match status" value="1"/>
</dbReference>
<evidence type="ECO:0000250" key="1"/>
<evidence type="ECO:0000250" key="2">
    <source>
        <dbReference type="UniProtKB" id="P0A951"/>
    </source>
</evidence>
<evidence type="ECO:0000250" key="3">
    <source>
        <dbReference type="UniProtKB" id="Q9KL03"/>
    </source>
</evidence>
<evidence type="ECO:0000255" key="4">
    <source>
        <dbReference type="PROSITE-ProRule" id="PRU00532"/>
    </source>
</evidence>
<evidence type="ECO:0000305" key="5"/>
<protein>
    <recommendedName>
        <fullName evidence="2">Spermidine N(1)-acetyltransferase</fullName>
        <shortName evidence="2">SAT</shortName>
        <ecNumber evidence="2">2.3.1.57</ecNumber>
    </recommendedName>
    <alternativeName>
        <fullName evidence="2">Spermidine/spermine N(1)-acetyltransferase</fullName>
        <shortName evidence="2">SSAT</shortName>
    </alternativeName>
</protein>
<keyword id="KW-0012">Acyltransferase</keyword>
<keyword id="KW-0963">Cytoplasm</keyword>
<keyword id="KW-0460">Magnesium</keyword>
<keyword id="KW-0479">Metal-binding</keyword>
<keyword id="KW-1185">Reference proteome</keyword>
<keyword id="KW-0808">Transferase</keyword>
<feature type="initiator methionine" description="Removed" evidence="1">
    <location>
        <position position="1"/>
    </location>
</feature>
<feature type="chain" id="PRO_0000074589" description="Spermidine N(1)-acetyltransferase">
    <location>
        <begin position="2"/>
        <end position="186"/>
    </location>
</feature>
<feature type="domain" description="N-acetyltransferase" evidence="4">
    <location>
        <begin position="7"/>
        <end position="167"/>
    </location>
</feature>
<feature type="active site" description="Proton donor" evidence="2">
    <location>
        <position position="135"/>
    </location>
</feature>
<feature type="binding site" evidence="3">
    <location>
        <position position="30"/>
    </location>
    <ligand>
        <name>spermine</name>
        <dbReference type="ChEBI" id="CHEBI:45725"/>
    </ligand>
</feature>
<feature type="binding site" evidence="2">
    <location>
        <position position="35"/>
    </location>
    <ligand>
        <name>Mg(2+)</name>
        <dbReference type="ChEBI" id="CHEBI:18420"/>
    </ligand>
</feature>
<feature type="binding site" evidence="3">
    <location>
        <position position="35"/>
    </location>
    <ligand>
        <name>spermidine</name>
        <dbReference type="ChEBI" id="CHEBI:57834"/>
    </ligand>
</feature>
<feature type="binding site" evidence="3">
    <location>
        <position position="35"/>
    </location>
    <ligand>
        <name>spermine</name>
        <dbReference type="ChEBI" id="CHEBI:45725"/>
    </ligand>
</feature>
<feature type="binding site" evidence="3">
    <location>
        <position position="43"/>
    </location>
    <ligand>
        <name>spermidine</name>
        <dbReference type="ChEBI" id="CHEBI:57834"/>
    </ligand>
</feature>
<feature type="binding site" evidence="3">
    <location>
        <position position="43"/>
    </location>
    <ligand>
        <name>spermine</name>
        <dbReference type="ChEBI" id="CHEBI:45725"/>
    </ligand>
</feature>
<feature type="binding site" evidence="3">
    <location>
        <begin position="51"/>
        <end position="54"/>
    </location>
    <ligand>
        <name>spermine</name>
        <dbReference type="ChEBI" id="CHEBI:45725"/>
    </ligand>
</feature>
<feature type="binding site" evidence="2">
    <location>
        <position position="76"/>
    </location>
    <ligand>
        <name>Mg(2+)</name>
        <dbReference type="ChEBI" id="CHEBI:18420"/>
    </ligand>
</feature>
<feature type="binding site" evidence="3">
    <location>
        <begin position="85"/>
        <end position="87"/>
    </location>
    <ligand>
        <name>spermine</name>
        <dbReference type="ChEBI" id="CHEBI:45725"/>
    </ligand>
</feature>
<feature type="binding site" evidence="3">
    <location>
        <begin position="88"/>
        <end position="90"/>
    </location>
    <ligand>
        <name>acetyl-CoA</name>
        <dbReference type="ChEBI" id="CHEBI:57288"/>
    </ligand>
</feature>
<feature type="binding site" evidence="3">
    <location>
        <begin position="95"/>
        <end position="101"/>
    </location>
    <ligand>
        <name>acetyl-CoA</name>
        <dbReference type="ChEBI" id="CHEBI:57288"/>
    </ligand>
</feature>
<feature type="binding site" evidence="3">
    <location>
        <begin position="128"/>
        <end position="137"/>
    </location>
    <ligand>
        <name>acetyl-CoA</name>
        <dbReference type="ChEBI" id="CHEBI:57288"/>
    </ligand>
</feature>
<feature type="site" description="Could be important for selectivity toward long polyamines" evidence="3">
    <location>
        <position position="85"/>
    </location>
</feature>
<gene>
    <name type="primary">speG</name>
    <name type="ordered locus">Z2571</name>
    <name type="ordered locus">ECs2290</name>
</gene>
<accession>P0A952</accession>
<accession>P37354</accession>
<proteinExistence type="inferred from homology"/>
<sequence length="186" mass="21887">MPSAHSVKLRPLEREDLRYVHQLDNNASVMRYWFEEPYEAFVELSDLYDKHIHDQSERRFVVECDGEKAGLVELVEINHVHRRAEFQIIISPEYQGKGLATRAAKLAMDYGFTVLNLYKLYLIVDKENEKAIHIYRKLGFSVEGELMHEFFINGQYRNAIRMCIFQHQYLAEHKTPGQTLLKPTAQ</sequence>
<reference key="1">
    <citation type="journal article" date="2001" name="Nature">
        <title>Genome sequence of enterohaemorrhagic Escherichia coli O157:H7.</title>
        <authorList>
            <person name="Perna N.T."/>
            <person name="Plunkett G. III"/>
            <person name="Burland V."/>
            <person name="Mau B."/>
            <person name="Glasner J.D."/>
            <person name="Rose D.J."/>
            <person name="Mayhew G.F."/>
            <person name="Evans P.S."/>
            <person name="Gregor J."/>
            <person name="Kirkpatrick H.A."/>
            <person name="Posfai G."/>
            <person name="Hackett J."/>
            <person name="Klink S."/>
            <person name="Boutin A."/>
            <person name="Shao Y."/>
            <person name="Miller L."/>
            <person name="Grotbeck E.J."/>
            <person name="Davis N.W."/>
            <person name="Lim A."/>
            <person name="Dimalanta E.T."/>
            <person name="Potamousis K."/>
            <person name="Apodaca J."/>
            <person name="Anantharaman T.S."/>
            <person name="Lin J."/>
            <person name="Yen G."/>
            <person name="Schwartz D.C."/>
            <person name="Welch R.A."/>
            <person name="Blattner F.R."/>
        </authorList>
    </citation>
    <scope>NUCLEOTIDE SEQUENCE [LARGE SCALE GENOMIC DNA]</scope>
    <source>
        <strain>O157:H7 / EDL933 / ATCC 700927 / EHEC</strain>
    </source>
</reference>
<reference key="2">
    <citation type="journal article" date="2001" name="DNA Res.">
        <title>Complete genome sequence of enterohemorrhagic Escherichia coli O157:H7 and genomic comparison with a laboratory strain K-12.</title>
        <authorList>
            <person name="Hayashi T."/>
            <person name="Makino K."/>
            <person name="Ohnishi M."/>
            <person name="Kurokawa K."/>
            <person name="Ishii K."/>
            <person name="Yokoyama K."/>
            <person name="Han C.-G."/>
            <person name="Ohtsubo E."/>
            <person name="Nakayama K."/>
            <person name="Murata T."/>
            <person name="Tanaka M."/>
            <person name="Tobe T."/>
            <person name="Iida T."/>
            <person name="Takami H."/>
            <person name="Honda T."/>
            <person name="Sasakawa C."/>
            <person name="Ogasawara N."/>
            <person name="Yasunaga T."/>
            <person name="Kuhara S."/>
            <person name="Shiba T."/>
            <person name="Hattori M."/>
            <person name="Shinagawa H."/>
        </authorList>
    </citation>
    <scope>NUCLEOTIDE SEQUENCE [LARGE SCALE GENOMIC DNA]</scope>
    <source>
        <strain>O157:H7 / Sakai / RIMD 0509952 / EHEC</strain>
    </source>
</reference>
<comment type="function">
    <text evidence="2">Involved in the protection against polyamine toxicity by regulating their concentration. Catalyzes the transfer of an acetyl group from acetyl coenzyme A (AcCoA) to the primary amino groups of spermidine to yield N(1)- and N(8)-acetylspermidine. It can also use spermine.</text>
</comment>
<comment type="catalytic activity">
    <reaction evidence="2">
        <text>an alkane-alpha,omega-diamine + acetyl-CoA = an N-acetylalkane-alpha,omega-diamine + CoA + H(+)</text>
        <dbReference type="Rhea" id="RHEA:11116"/>
        <dbReference type="Rhea" id="RHEA-COMP:9766"/>
        <dbReference type="Rhea" id="RHEA-COMP:9767"/>
        <dbReference type="ChEBI" id="CHEBI:15378"/>
        <dbReference type="ChEBI" id="CHEBI:57287"/>
        <dbReference type="ChEBI" id="CHEBI:57288"/>
        <dbReference type="ChEBI" id="CHEBI:70977"/>
        <dbReference type="ChEBI" id="CHEBI:70988"/>
        <dbReference type="EC" id="2.3.1.57"/>
    </reaction>
</comment>
<comment type="catalytic activity">
    <reaction evidence="2">
        <text>spermidine + acetyl-CoA = N(1)-acetylspermidine + CoA + H(+)</text>
        <dbReference type="Rhea" id="RHEA:28150"/>
        <dbReference type="ChEBI" id="CHEBI:15378"/>
        <dbReference type="ChEBI" id="CHEBI:57287"/>
        <dbReference type="ChEBI" id="CHEBI:57288"/>
        <dbReference type="ChEBI" id="CHEBI:57834"/>
        <dbReference type="ChEBI" id="CHEBI:58324"/>
        <dbReference type="EC" id="2.3.1.57"/>
    </reaction>
</comment>
<comment type="catalytic activity">
    <reaction evidence="2">
        <text>spermidine + acetyl-CoA = N(8)-acetylspermidine + CoA + H(+)</text>
        <dbReference type="Rhea" id="RHEA:28270"/>
        <dbReference type="ChEBI" id="CHEBI:15378"/>
        <dbReference type="ChEBI" id="CHEBI:57287"/>
        <dbReference type="ChEBI" id="CHEBI:57288"/>
        <dbReference type="ChEBI" id="CHEBI:57834"/>
        <dbReference type="ChEBI" id="CHEBI:58535"/>
        <dbReference type="EC" id="2.3.1.57"/>
    </reaction>
</comment>
<comment type="catalytic activity">
    <reaction evidence="2">
        <text>spermine + acetyl-CoA = N(1)-acetylspermine + CoA + H(+)</text>
        <dbReference type="Rhea" id="RHEA:33099"/>
        <dbReference type="ChEBI" id="CHEBI:15378"/>
        <dbReference type="ChEBI" id="CHEBI:45725"/>
        <dbReference type="ChEBI" id="CHEBI:57287"/>
        <dbReference type="ChEBI" id="CHEBI:57288"/>
        <dbReference type="ChEBI" id="CHEBI:58101"/>
        <dbReference type="EC" id="2.3.1.57"/>
    </reaction>
</comment>
<comment type="pathway">
    <text evidence="2">Amine and polyamine degradation; spermidine degradation.</text>
</comment>
<comment type="pathway">
    <text evidence="2">Amine and polyamine degradation; spermine degradation.</text>
</comment>
<comment type="subunit">
    <text evidence="2">Homododecamer.</text>
</comment>
<comment type="subcellular location">
    <subcellularLocation>
        <location evidence="2">Cytoplasm</location>
    </subcellularLocation>
</comment>
<comment type="similarity">
    <text evidence="5">Belongs to the acetyltransferase family.</text>
</comment>
<name>ATDA_ECO57</name>